<gene>
    <name evidence="1" type="primary">rutC</name>
    <name type="ordered locus">METDI2410</name>
</gene>
<protein>
    <recommendedName>
        <fullName evidence="1">3-aminoacrylate deaminase RutC</fullName>
        <shortName evidence="1">3-AA deaminase</shortName>
        <ecNumber evidence="1">3.5.-.-</ecNumber>
    </recommendedName>
</protein>
<organism>
    <name type="scientific">Methylorubrum extorquens (strain DSM 6343 / CIP 106787 / DM4)</name>
    <name type="common">Methylobacterium extorquens</name>
    <dbReference type="NCBI Taxonomy" id="661410"/>
    <lineage>
        <taxon>Bacteria</taxon>
        <taxon>Pseudomonadati</taxon>
        <taxon>Pseudomonadota</taxon>
        <taxon>Alphaproteobacteria</taxon>
        <taxon>Hyphomicrobiales</taxon>
        <taxon>Methylobacteriaceae</taxon>
        <taxon>Methylorubrum</taxon>
    </lineage>
</organism>
<accession>C7CM34</accession>
<comment type="function">
    <text evidence="1">Involved in pyrimidine catabolism. Catalyzes the deamination of 3-aminoacrylate to malonic semialdehyde, a reaction that can also occur spontaneously. RutC may facilitate the reaction and modulate the metabolic fitness, rather than catalyzing essential functions.</text>
</comment>
<comment type="catalytic activity">
    <reaction evidence="1">
        <text>(Z)-3-aminoacrylate + H2O + H(+) = 3-oxopropanoate + NH4(+)</text>
        <dbReference type="Rhea" id="RHEA:34947"/>
        <dbReference type="ChEBI" id="CHEBI:15377"/>
        <dbReference type="ChEBI" id="CHEBI:15378"/>
        <dbReference type="ChEBI" id="CHEBI:28938"/>
        <dbReference type="ChEBI" id="CHEBI:33190"/>
        <dbReference type="ChEBI" id="CHEBI:59894"/>
    </reaction>
</comment>
<comment type="similarity">
    <text evidence="1">Belongs to the RutC family.</text>
</comment>
<name>RUTC_METED</name>
<reference key="1">
    <citation type="journal article" date="2009" name="PLoS ONE">
        <title>Methylobacterium genome sequences: a reference blueprint to investigate microbial metabolism of C1 compounds from natural and industrial sources.</title>
        <authorList>
            <person name="Vuilleumier S."/>
            <person name="Chistoserdova L."/>
            <person name="Lee M.-C."/>
            <person name="Bringel F."/>
            <person name="Lajus A."/>
            <person name="Zhou Y."/>
            <person name="Gourion B."/>
            <person name="Barbe V."/>
            <person name="Chang J."/>
            <person name="Cruveiller S."/>
            <person name="Dossat C."/>
            <person name="Gillett W."/>
            <person name="Gruffaz C."/>
            <person name="Haugen E."/>
            <person name="Hourcade E."/>
            <person name="Levy R."/>
            <person name="Mangenot S."/>
            <person name="Muller E."/>
            <person name="Nadalig T."/>
            <person name="Pagni M."/>
            <person name="Penny C."/>
            <person name="Peyraud R."/>
            <person name="Robinson D.G."/>
            <person name="Roche D."/>
            <person name="Rouy Z."/>
            <person name="Saenampechek C."/>
            <person name="Salvignol G."/>
            <person name="Vallenet D."/>
            <person name="Wu Z."/>
            <person name="Marx C.J."/>
            <person name="Vorholt J.A."/>
            <person name="Olson M.V."/>
            <person name="Kaul R."/>
            <person name="Weissenbach J."/>
            <person name="Medigue C."/>
            <person name="Lidstrom M.E."/>
        </authorList>
    </citation>
    <scope>NUCLEOTIDE SEQUENCE [LARGE SCALE GENOMIC DNA]</scope>
    <source>
        <strain>DSM 6343 / CIP 106787 / DM4</strain>
    </source>
</reference>
<dbReference type="EC" id="3.5.-.-" evidence="1"/>
<dbReference type="EMBL" id="FP103042">
    <property type="protein sequence ID" value="CAX24014.1"/>
    <property type="molecule type" value="Genomic_DNA"/>
</dbReference>
<dbReference type="RefSeq" id="WP_012253315.1">
    <property type="nucleotide sequence ID" value="NC_012988.1"/>
</dbReference>
<dbReference type="SMR" id="C7CM34"/>
<dbReference type="GeneID" id="72989393"/>
<dbReference type="KEGG" id="mdi:METDI2410"/>
<dbReference type="HOGENOM" id="CLU_100715_7_3_5"/>
<dbReference type="Proteomes" id="UP000008070">
    <property type="component" value="Chromosome"/>
</dbReference>
<dbReference type="GO" id="GO:0005829">
    <property type="term" value="C:cytosol"/>
    <property type="evidence" value="ECO:0007669"/>
    <property type="project" value="TreeGrafter"/>
</dbReference>
<dbReference type="GO" id="GO:0019239">
    <property type="term" value="F:deaminase activity"/>
    <property type="evidence" value="ECO:0007669"/>
    <property type="project" value="TreeGrafter"/>
</dbReference>
<dbReference type="GO" id="GO:0019740">
    <property type="term" value="P:nitrogen utilization"/>
    <property type="evidence" value="ECO:0007669"/>
    <property type="project" value="UniProtKB-UniRule"/>
</dbReference>
<dbReference type="GO" id="GO:0006212">
    <property type="term" value="P:uracil catabolic process"/>
    <property type="evidence" value="ECO:0007669"/>
    <property type="project" value="UniProtKB-UniRule"/>
</dbReference>
<dbReference type="CDD" id="cd00448">
    <property type="entry name" value="YjgF_YER057c_UK114_family"/>
    <property type="match status" value="1"/>
</dbReference>
<dbReference type="Gene3D" id="3.30.1330.40">
    <property type="entry name" value="RutC-like"/>
    <property type="match status" value="1"/>
</dbReference>
<dbReference type="HAMAP" id="MF_00831">
    <property type="entry name" value="RutC"/>
    <property type="match status" value="1"/>
</dbReference>
<dbReference type="InterPro" id="IPR019898">
    <property type="entry name" value="RutC"/>
</dbReference>
<dbReference type="InterPro" id="IPR035959">
    <property type="entry name" value="RutC-like_sf"/>
</dbReference>
<dbReference type="InterPro" id="IPR006175">
    <property type="entry name" value="YjgF/YER057c/UK114"/>
</dbReference>
<dbReference type="NCBIfam" id="TIGR03610">
    <property type="entry name" value="RutC"/>
    <property type="match status" value="1"/>
</dbReference>
<dbReference type="PANTHER" id="PTHR11803">
    <property type="entry name" value="2-IMINOBUTANOATE/2-IMINOPROPANOATE DEAMINASE RIDA"/>
    <property type="match status" value="1"/>
</dbReference>
<dbReference type="PANTHER" id="PTHR11803:SF58">
    <property type="entry name" value="PROTEIN HMF1-RELATED"/>
    <property type="match status" value="1"/>
</dbReference>
<dbReference type="Pfam" id="PF01042">
    <property type="entry name" value="Ribonuc_L-PSP"/>
    <property type="match status" value="1"/>
</dbReference>
<dbReference type="SUPFAM" id="SSF55298">
    <property type="entry name" value="YjgF-like"/>
    <property type="match status" value="1"/>
</dbReference>
<evidence type="ECO:0000255" key="1">
    <source>
        <dbReference type="HAMAP-Rule" id="MF_00831"/>
    </source>
</evidence>
<keyword id="KW-0378">Hydrolase</keyword>
<feature type="chain" id="PRO_0000402756" description="3-aminoacrylate deaminase RutC">
    <location>
        <begin position="1"/>
        <end position="130"/>
    </location>
</feature>
<sequence length="130" mass="13575">MPKTVVIPPGTGKPLAPYVPGTLADGVLYVSGTLPLDAEANVVHEGDAGAQTRHVLETIKGVVEAAGGSMDDVTFNHIFLKDWADYGAINAVYATYFPGEKPARYCIQCGLVKPTALVEIASVAHIGKPA</sequence>
<proteinExistence type="inferred from homology"/>